<dbReference type="EMBL" id="AB013388">
    <property type="protein sequence ID" value="BAB09787.1"/>
    <property type="molecule type" value="Genomic_DNA"/>
</dbReference>
<dbReference type="EMBL" id="CP002688">
    <property type="protein sequence ID" value="AED96329.1"/>
    <property type="molecule type" value="Genomic_DNA"/>
</dbReference>
<dbReference type="EMBL" id="BT010777">
    <property type="protein sequence ID" value="AAR24144.1"/>
    <property type="molecule type" value="mRNA"/>
</dbReference>
<dbReference type="EMBL" id="BT011258">
    <property type="protein sequence ID" value="AAR92294.1"/>
    <property type="molecule type" value="mRNA"/>
</dbReference>
<dbReference type="EMBL" id="AK228915">
    <property type="protein sequence ID" value="BAF00804.1"/>
    <property type="molecule type" value="mRNA"/>
</dbReference>
<dbReference type="RefSeq" id="NP_200137.1">
    <property type="nucleotide sequence ID" value="NM_124704.3"/>
</dbReference>
<dbReference type="STRING" id="3702.Q9FK16"/>
<dbReference type="GlyCosmos" id="Q9FK16">
    <property type="glycosylation" value="3 sites, No reported glycans"/>
</dbReference>
<dbReference type="PaxDb" id="3702-AT5G53250.1"/>
<dbReference type="EnsemblPlants" id="AT5G53250.1">
    <property type="protein sequence ID" value="AT5G53250.1"/>
    <property type="gene ID" value="AT5G53250"/>
</dbReference>
<dbReference type="GeneID" id="835406"/>
<dbReference type="Gramene" id="AT5G53250.1">
    <property type="protein sequence ID" value="AT5G53250.1"/>
    <property type="gene ID" value="AT5G53250"/>
</dbReference>
<dbReference type="KEGG" id="ath:AT5G53250"/>
<dbReference type="Araport" id="AT5G53250"/>
<dbReference type="TAIR" id="AT5G53250">
    <property type="gene designation" value="AGP22"/>
</dbReference>
<dbReference type="HOGENOM" id="CLU_187330_0_0_1"/>
<dbReference type="InParanoid" id="Q9FK16"/>
<dbReference type="OMA" id="AVTYFIH"/>
<dbReference type="PhylomeDB" id="Q9FK16"/>
<dbReference type="PRO" id="PR:Q9FK16"/>
<dbReference type="Proteomes" id="UP000006548">
    <property type="component" value="Chromosome 5"/>
</dbReference>
<dbReference type="ExpressionAtlas" id="Q9FK16">
    <property type="expression patterns" value="baseline and differential"/>
</dbReference>
<dbReference type="GO" id="GO:0005886">
    <property type="term" value="C:plasma membrane"/>
    <property type="evidence" value="ECO:0007669"/>
    <property type="project" value="UniProtKB-SubCell"/>
</dbReference>
<dbReference type="GO" id="GO:0098552">
    <property type="term" value="C:side of membrane"/>
    <property type="evidence" value="ECO:0007669"/>
    <property type="project" value="UniProtKB-KW"/>
</dbReference>
<dbReference type="InterPro" id="IPR009424">
    <property type="entry name" value="AGP16/20/22/41"/>
</dbReference>
<dbReference type="PANTHER" id="PTHR33374">
    <property type="entry name" value="ARABINOGALACTAN PROTEIN 20"/>
    <property type="match status" value="1"/>
</dbReference>
<dbReference type="Pfam" id="PF06376">
    <property type="entry name" value="AGP"/>
    <property type="match status" value="1"/>
</dbReference>
<feature type="signal peptide" evidence="1">
    <location>
        <begin position="1"/>
        <end position="27"/>
    </location>
</feature>
<feature type="peptide" id="PRO_0000269025" description="Arabinogalactan protein 22" evidence="1">
    <location>
        <begin position="28"/>
        <end position="38"/>
    </location>
</feature>
<feature type="propeptide" id="PRO_0000269026" description="Removed in mature form" evidence="4">
    <location>
        <begin position="39"/>
        <end position="63"/>
    </location>
</feature>
<feature type="modified residue" description="4-hydroxyproline" evidence="1">
    <location>
        <position position="32"/>
    </location>
</feature>
<feature type="modified residue" description="4-hydroxyproline" evidence="1">
    <location>
        <position position="34"/>
    </location>
</feature>
<feature type="modified residue" description="4-hydroxyproline" evidence="1">
    <location>
        <position position="36"/>
    </location>
</feature>
<feature type="lipid moiety-binding region" description="GPI-anchor amidated serine" evidence="1">
    <location>
        <position position="38"/>
    </location>
</feature>
<feature type="glycosylation site" description="O-linked (Ara...) hydroxyproline" evidence="4">
    <location>
        <position position="32"/>
    </location>
</feature>
<feature type="glycosylation site" description="O-linked (Ara...) hydroxyproline" evidence="4">
    <location>
        <position position="34"/>
    </location>
</feature>
<feature type="glycosylation site" description="O-linked (Ara...) hydroxyproline" evidence="4">
    <location>
        <position position="36"/>
    </location>
</feature>
<keyword id="KW-1003">Cell membrane</keyword>
<keyword id="KW-0903">Direct protein sequencing</keyword>
<keyword id="KW-0325">Glycoprotein</keyword>
<keyword id="KW-0336">GPI-anchor</keyword>
<keyword id="KW-0379">Hydroxylation</keyword>
<keyword id="KW-0449">Lipoprotein</keyword>
<keyword id="KW-0472">Membrane</keyword>
<keyword id="KW-0654">Proteoglycan</keyword>
<keyword id="KW-1185">Reference proteome</keyword>
<keyword id="KW-0732">Signal</keyword>
<evidence type="ECO:0000269" key="1">
    <source>
    </source>
</evidence>
<evidence type="ECO:0000303" key="2">
    <source>
    </source>
</evidence>
<evidence type="ECO:0000305" key="3"/>
<evidence type="ECO:0000305" key="4">
    <source>
    </source>
</evidence>
<name>AGP22_ARATH</name>
<organism>
    <name type="scientific">Arabidopsis thaliana</name>
    <name type="common">Mouse-ear cress</name>
    <dbReference type="NCBI Taxonomy" id="3702"/>
    <lineage>
        <taxon>Eukaryota</taxon>
        <taxon>Viridiplantae</taxon>
        <taxon>Streptophyta</taxon>
        <taxon>Embryophyta</taxon>
        <taxon>Tracheophyta</taxon>
        <taxon>Spermatophyta</taxon>
        <taxon>Magnoliopsida</taxon>
        <taxon>eudicotyledons</taxon>
        <taxon>Gunneridae</taxon>
        <taxon>Pentapetalae</taxon>
        <taxon>rosids</taxon>
        <taxon>malvids</taxon>
        <taxon>Brassicales</taxon>
        <taxon>Brassicaceae</taxon>
        <taxon>Camelineae</taxon>
        <taxon>Arabidopsis</taxon>
    </lineage>
</organism>
<sequence length="63" mass="6672">MASLKFPLEILAVFVIISVILLPIAQSHSSSPAPAPTSDGTSIDQGIAYVLMMVALALTYFIH</sequence>
<reference key="1">
    <citation type="journal article" date="1998" name="DNA Res.">
        <title>Structural analysis of Arabidopsis thaliana chromosome 5. VI. Sequence features of the regions of 1,367,185 bp covered by 19 physically assigned P1 and TAC clones.</title>
        <authorList>
            <person name="Kotani H."/>
            <person name="Nakamura Y."/>
            <person name="Sato S."/>
            <person name="Asamizu E."/>
            <person name="Kaneko T."/>
            <person name="Miyajima N."/>
            <person name="Tabata S."/>
        </authorList>
    </citation>
    <scope>NUCLEOTIDE SEQUENCE [LARGE SCALE GENOMIC DNA]</scope>
    <source>
        <strain>cv. Columbia</strain>
    </source>
</reference>
<reference key="2">
    <citation type="journal article" date="2017" name="Plant J.">
        <title>Araport11: a complete reannotation of the Arabidopsis thaliana reference genome.</title>
        <authorList>
            <person name="Cheng C.Y."/>
            <person name="Krishnakumar V."/>
            <person name="Chan A.P."/>
            <person name="Thibaud-Nissen F."/>
            <person name="Schobel S."/>
            <person name="Town C.D."/>
        </authorList>
    </citation>
    <scope>GENOME REANNOTATION</scope>
    <source>
        <strain>cv. Columbia</strain>
    </source>
</reference>
<reference key="3">
    <citation type="submission" date="2004-01" db="EMBL/GenBank/DDBJ databases">
        <title>Arabidopsis ORF clones.</title>
        <authorList>
            <person name="Cheuk R.F."/>
            <person name="Chen H."/>
            <person name="Kim C.J."/>
            <person name="Shinn P."/>
            <person name="Ecker J.R."/>
        </authorList>
    </citation>
    <scope>NUCLEOTIDE SEQUENCE [LARGE SCALE MRNA]</scope>
    <source>
        <strain>cv. Columbia</strain>
    </source>
</reference>
<reference key="4">
    <citation type="submission" date="2006-07" db="EMBL/GenBank/DDBJ databases">
        <title>Large-scale analysis of RIKEN Arabidopsis full-length (RAFL) cDNAs.</title>
        <authorList>
            <person name="Totoki Y."/>
            <person name="Seki M."/>
            <person name="Ishida J."/>
            <person name="Nakajima M."/>
            <person name="Enju A."/>
            <person name="Kamiya A."/>
            <person name="Narusaka M."/>
            <person name="Shin-i T."/>
            <person name="Nakagawa M."/>
            <person name="Sakamoto N."/>
            <person name="Oishi K."/>
            <person name="Kohara Y."/>
            <person name="Kobayashi M."/>
            <person name="Toyoda A."/>
            <person name="Sakaki Y."/>
            <person name="Sakurai T."/>
            <person name="Iida K."/>
            <person name="Akiyama K."/>
            <person name="Satou M."/>
            <person name="Toyoda T."/>
            <person name="Konagaya A."/>
            <person name="Carninci P."/>
            <person name="Kawai J."/>
            <person name="Hayashizaki Y."/>
            <person name="Shinozaki K."/>
        </authorList>
    </citation>
    <scope>NUCLEOTIDE SEQUENCE [LARGE SCALE MRNA]</scope>
    <source>
        <strain>cv. Columbia</strain>
    </source>
</reference>
<reference key="5">
    <citation type="journal article" date="2004" name="J. Biol. Chem.">
        <title>Post-translational modifications of arabinogalactan-peptides of Arabidopsis thaliana. Endoplasmic reticulum and glycosylphosphatidylinositol-anchor signal cleavage sites and hydroxylation of proline.</title>
        <authorList>
            <person name="Schultz C.J."/>
            <person name="Ferguson K.L."/>
            <person name="Lahnstein J."/>
            <person name="Bacic A."/>
        </authorList>
    </citation>
    <scope>PROTEIN SEQUENCE OF 28-38</scope>
    <scope>HYDROXYLATION AT PRO-32; PRO-34 AND PRO-36</scope>
    <scope>GLYCOSYLATION AT PRO-32; PRO-34 AND PRO-36</scope>
    <scope>GPI-ANCHOR AT SER-38</scope>
</reference>
<reference key="6">
    <citation type="journal article" date="2002" name="Plant Physiol.">
        <title>Using genomic resources to guide research directions. The arabinogalactan protein gene family as a test case.</title>
        <authorList>
            <person name="Schultz C.J."/>
            <person name="Rumsewicz M.P."/>
            <person name="Johnson K.L."/>
            <person name="Jones B.J."/>
            <person name="Gaspar Y.M."/>
            <person name="Bacic A."/>
        </authorList>
    </citation>
    <scope>GENE FAMILY</scope>
    <scope>NOMENCLATURE</scope>
</reference>
<proteinExistence type="evidence at protein level"/>
<gene>
    <name evidence="2" type="primary">AGP22</name>
    <name type="ordered locus">At5g53250</name>
    <name type="ORF">K19E1.5</name>
</gene>
<comment type="function">
    <text evidence="3">Proteoglycan that seems to be implicated in diverse developmental roles such as differentiation, cell-cell recognition, embryogenesis and programmed cell death.</text>
</comment>
<comment type="subcellular location">
    <subcellularLocation>
        <location evidence="3">Cell membrane</location>
        <topology evidence="1">Lipid-anchor</topology>
        <topology evidence="1">GPI-anchor</topology>
    </subcellularLocation>
</comment>
<comment type="PTM">
    <text evidence="1">Contains 4-hydroxyproline; hydroxylated on Pro-32, Pro-34 and Pro-36.</text>
</comment>
<comment type="PTM">
    <text evidence="4">O-glycosylated on hydroxyprolines; noncontiguous hydroxylproline residues are glycosylated with arabinogalactan.</text>
</comment>
<comment type="similarity">
    <text evidence="3">Belongs to the AG-peptide AGP family.</text>
</comment>
<accession>Q9FK16</accession>
<protein>
    <recommendedName>
        <fullName evidence="2">Arabinogalactan protein 22</fullName>
        <shortName evidence="2">AtAGP22</shortName>
    </recommendedName>
    <alternativeName>
        <fullName evidence="2">Arabinogalactan peptide 22</fullName>
        <shortName evidence="2">AG-peptide 22</shortName>
    </alternativeName>
</protein>